<name>NUOI_RHOCS</name>
<accession>B6ISX3</accession>
<reference key="1">
    <citation type="submission" date="2007-03" db="EMBL/GenBank/DDBJ databases">
        <title>Genome sequence of Rhodospirillum centenum.</title>
        <authorList>
            <person name="Touchman J.W."/>
            <person name="Bauer C."/>
            <person name="Blankenship R.E."/>
        </authorList>
    </citation>
    <scope>NUCLEOTIDE SEQUENCE [LARGE SCALE GENOMIC DNA]</scope>
    <source>
        <strain>ATCC 51521 / SW</strain>
    </source>
</reference>
<proteinExistence type="inferred from homology"/>
<dbReference type="EC" id="7.1.1.-" evidence="1"/>
<dbReference type="EMBL" id="CP000613">
    <property type="protein sequence ID" value="ACI98644.1"/>
    <property type="molecule type" value="Genomic_DNA"/>
</dbReference>
<dbReference type="RefSeq" id="WP_012566432.1">
    <property type="nucleotide sequence ID" value="NC_011420.2"/>
</dbReference>
<dbReference type="SMR" id="B6ISX3"/>
<dbReference type="STRING" id="414684.RC1_1232"/>
<dbReference type="KEGG" id="rce:RC1_1232"/>
<dbReference type="eggNOG" id="COG1143">
    <property type="taxonomic scope" value="Bacteria"/>
</dbReference>
<dbReference type="HOGENOM" id="CLU_067218_5_1_5"/>
<dbReference type="OrthoDB" id="9808559at2"/>
<dbReference type="Proteomes" id="UP000001591">
    <property type="component" value="Chromosome"/>
</dbReference>
<dbReference type="GO" id="GO:0005886">
    <property type="term" value="C:plasma membrane"/>
    <property type="evidence" value="ECO:0007669"/>
    <property type="project" value="UniProtKB-SubCell"/>
</dbReference>
<dbReference type="GO" id="GO:0051539">
    <property type="term" value="F:4 iron, 4 sulfur cluster binding"/>
    <property type="evidence" value="ECO:0007669"/>
    <property type="project" value="UniProtKB-KW"/>
</dbReference>
<dbReference type="GO" id="GO:0005506">
    <property type="term" value="F:iron ion binding"/>
    <property type="evidence" value="ECO:0007669"/>
    <property type="project" value="UniProtKB-UniRule"/>
</dbReference>
<dbReference type="GO" id="GO:0050136">
    <property type="term" value="F:NADH:ubiquinone reductase (non-electrogenic) activity"/>
    <property type="evidence" value="ECO:0007669"/>
    <property type="project" value="UniProtKB-UniRule"/>
</dbReference>
<dbReference type="GO" id="GO:0048038">
    <property type="term" value="F:quinone binding"/>
    <property type="evidence" value="ECO:0007669"/>
    <property type="project" value="UniProtKB-KW"/>
</dbReference>
<dbReference type="GO" id="GO:0009060">
    <property type="term" value="P:aerobic respiration"/>
    <property type="evidence" value="ECO:0007669"/>
    <property type="project" value="TreeGrafter"/>
</dbReference>
<dbReference type="FunFam" id="3.30.70.3270:FF:000001">
    <property type="entry name" value="NADH-quinone oxidoreductase subunit I 1"/>
    <property type="match status" value="1"/>
</dbReference>
<dbReference type="Gene3D" id="3.30.70.3270">
    <property type="match status" value="1"/>
</dbReference>
<dbReference type="HAMAP" id="MF_01351">
    <property type="entry name" value="NDH1_NuoI"/>
    <property type="match status" value="1"/>
</dbReference>
<dbReference type="InterPro" id="IPR017896">
    <property type="entry name" value="4Fe4S_Fe-S-bd"/>
</dbReference>
<dbReference type="InterPro" id="IPR017900">
    <property type="entry name" value="4Fe4S_Fe_S_CS"/>
</dbReference>
<dbReference type="InterPro" id="IPR010226">
    <property type="entry name" value="NADH_quinone_OxRdtase_chainI"/>
</dbReference>
<dbReference type="NCBIfam" id="TIGR01971">
    <property type="entry name" value="NuoI"/>
    <property type="match status" value="1"/>
</dbReference>
<dbReference type="NCBIfam" id="NF004538">
    <property type="entry name" value="PRK05888.1-4"/>
    <property type="match status" value="1"/>
</dbReference>
<dbReference type="NCBIfam" id="NF004539">
    <property type="entry name" value="PRK05888.1-5"/>
    <property type="match status" value="1"/>
</dbReference>
<dbReference type="PANTHER" id="PTHR10849:SF20">
    <property type="entry name" value="NADH DEHYDROGENASE [UBIQUINONE] IRON-SULFUR PROTEIN 8, MITOCHONDRIAL"/>
    <property type="match status" value="1"/>
</dbReference>
<dbReference type="PANTHER" id="PTHR10849">
    <property type="entry name" value="NADH DEHYDROGENASE UBIQUINONE IRON-SULFUR PROTEIN 8, MITOCHONDRIAL"/>
    <property type="match status" value="1"/>
</dbReference>
<dbReference type="Pfam" id="PF12838">
    <property type="entry name" value="Fer4_7"/>
    <property type="match status" value="1"/>
</dbReference>
<dbReference type="SUPFAM" id="SSF54862">
    <property type="entry name" value="4Fe-4S ferredoxins"/>
    <property type="match status" value="1"/>
</dbReference>
<dbReference type="PROSITE" id="PS00198">
    <property type="entry name" value="4FE4S_FER_1"/>
    <property type="match status" value="2"/>
</dbReference>
<dbReference type="PROSITE" id="PS51379">
    <property type="entry name" value="4FE4S_FER_2"/>
    <property type="match status" value="2"/>
</dbReference>
<comment type="function">
    <text evidence="1">NDH-1 shuttles electrons from NADH, via FMN and iron-sulfur (Fe-S) centers, to quinones in the respiratory chain. The immediate electron acceptor for the enzyme in this species is believed to be ubiquinone. Couples the redox reaction to proton translocation (for every two electrons transferred, four hydrogen ions are translocated across the cytoplasmic membrane), and thus conserves the redox energy in a proton gradient.</text>
</comment>
<comment type="catalytic activity">
    <reaction evidence="1">
        <text>a quinone + NADH + 5 H(+)(in) = a quinol + NAD(+) + 4 H(+)(out)</text>
        <dbReference type="Rhea" id="RHEA:57888"/>
        <dbReference type="ChEBI" id="CHEBI:15378"/>
        <dbReference type="ChEBI" id="CHEBI:24646"/>
        <dbReference type="ChEBI" id="CHEBI:57540"/>
        <dbReference type="ChEBI" id="CHEBI:57945"/>
        <dbReference type="ChEBI" id="CHEBI:132124"/>
    </reaction>
</comment>
<comment type="cofactor">
    <cofactor evidence="1">
        <name>[4Fe-4S] cluster</name>
        <dbReference type="ChEBI" id="CHEBI:49883"/>
    </cofactor>
    <text evidence="1">Binds 2 [4Fe-4S] clusters per subunit.</text>
</comment>
<comment type="subunit">
    <text evidence="1">NDH-1 is composed of 14 different subunits. Subunits NuoA, H, J, K, L, M, N constitute the membrane sector of the complex.</text>
</comment>
<comment type="subcellular location">
    <subcellularLocation>
        <location evidence="1">Cell inner membrane</location>
        <topology evidence="1">Peripheral membrane protein</topology>
    </subcellularLocation>
</comment>
<comment type="similarity">
    <text evidence="1">Belongs to the complex I 23 kDa subunit family.</text>
</comment>
<organism>
    <name type="scientific">Rhodospirillum centenum (strain ATCC 51521 / SW)</name>
    <dbReference type="NCBI Taxonomy" id="414684"/>
    <lineage>
        <taxon>Bacteria</taxon>
        <taxon>Pseudomonadati</taxon>
        <taxon>Pseudomonadota</taxon>
        <taxon>Alphaproteobacteria</taxon>
        <taxon>Rhodospirillales</taxon>
        <taxon>Rhodospirillaceae</taxon>
        <taxon>Rhodospirillum</taxon>
    </lineage>
</organism>
<feature type="chain" id="PRO_1000143664" description="NADH-quinone oxidoreductase subunit I">
    <location>
        <begin position="1"/>
        <end position="162"/>
    </location>
</feature>
<feature type="domain" description="4Fe-4S ferredoxin-type 1" evidence="1">
    <location>
        <begin position="53"/>
        <end position="83"/>
    </location>
</feature>
<feature type="domain" description="4Fe-4S ferredoxin-type 2" evidence="1">
    <location>
        <begin position="93"/>
        <end position="122"/>
    </location>
</feature>
<feature type="binding site" evidence="1">
    <location>
        <position position="63"/>
    </location>
    <ligand>
        <name>[4Fe-4S] cluster</name>
        <dbReference type="ChEBI" id="CHEBI:49883"/>
        <label>1</label>
    </ligand>
</feature>
<feature type="binding site" evidence="1">
    <location>
        <position position="66"/>
    </location>
    <ligand>
        <name>[4Fe-4S] cluster</name>
        <dbReference type="ChEBI" id="CHEBI:49883"/>
        <label>1</label>
    </ligand>
</feature>
<feature type="binding site" evidence="1">
    <location>
        <position position="69"/>
    </location>
    <ligand>
        <name>[4Fe-4S] cluster</name>
        <dbReference type="ChEBI" id="CHEBI:49883"/>
        <label>1</label>
    </ligand>
</feature>
<feature type="binding site" evidence="1">
    <location>
        <position position="73"/>
    </location>
    <ligand>
        <name>[4Fe-4S] cluster</name>
        <dbReference type="ChEBI" id="CHEBI:49883"/>
        <label>2</label>
    </ligand>
</feature>
<feature type="binding site" evidence="1">
    <location>
        <position position="102"/>
    </location>
    <ligand>
        <name>[4Fe-4S] cluster</name>
        <dbReference type="ChEBI" id="CHEBI:49883"/>
        <label>2</label>
    </ligand>
</feature>
<feature type="binding site" evidence="1">
    <location>
        <position position="105"/>
    </location>
    <ligand>
        <name>[4Fe-4S] cluster</name>
        <dbReference type="ChEBI" id="CHEBI:49883"/>
        <label>2</label>
    </ligand>
</feature>
<feature type="binding site" evidence="1">
    <location>
        <position position="108"/>
    </location>
    <ligand>
        <name>[4Fe-4S] cluster</name>
        <dbReference type="ChEBI" id="CHEBI:49883"/>
        <label>2</label>
    </ligand>
</feature>
<feature type="binding site" evidence="1">
    <location>
        <position position="112"/>
    </location>
    <ligand>
        <name>[4Fe-4S] cluster</name>
        <dbReference type="ChEBI" id="CHEBI:49883"/>
        <label>1</label>
    </ligand>
</feature>
<keyword id="KW-0004">4Fe-4S</keyword>
<keyword id="KW-0997">Cell inner membrane</keyword>
<keyword id="KW-1003">Cell membrane</keyword>
<keyword id="KW-0408">Iron</keyword>
<keyword id="KW-0411">Iron-sulfur</keyword>
<keyword id="KW-0472">Membrane</keyword>
<keyword id="KW-0479">Metal-binding</keyword>
<keyword id="KW-0520">NAD</keyword>
<keyword id="KW-0874">Quinone</keyword>
<keyword id="KW-1185">Reference proteome</keyword>
<keyword id="KW-0677">Repeat</keyword>
<keyword id="KW-1278">Translocase</keyword>
<keyword id="KW-0830">Ubiquinone</keyword>
<evidence type="ECO:0000255" key="1">
    <source>
        <dbReference type="HAMAP-Rule" id="MF_01351"/>
    </source>
</evidence>
<gene>
    <name evidence="1" type="primary">nuoI</name>
    <name type="ordered locus">RC1_1232</name>
</gene>
<protein>
    <recommendedName>
        <fullName evidence="1">NADH-quinone oxidoreductase subunit I</fullName>
        <ecNumber evidence="1">7.1.1.-</ecNumber>
    </recommendedName>
    <alternativeName>
        <fullName evidence="1">NADH dehydrogenase I subunit I</fullName>
    </alternativeName>
    <alternativeName>
        <fullName evidence="1">NDH-1 subunit I</fullName>
    </alternativeName>
</protein>
<sequence>MVKLDRAARGLFLAELVRGLSLTFSYMFRPRATINYPYERSPMSPRFRGEHALRRYPNGEERCIACKLCEAVCPALAITIEAEPREDGSRRTTRYDIDMTKCIYCGLCQEACPVDAIVEGPNLEFAAETREELFYNKEKLLANGDRWEALIAANIAADAPYR</sequence>